<name>LYSC_TRIVU</name>
<protein>
    <recommendedName>
        <fullName>Lysozyme C</fullName>
        <ecNumber>3.2.1.17</ecNumber>
    </recommendedName>
    <alternativeName>
        <fullName>1,4-beta-N-acetylmuramidase C</fullName>
    </alternativeName>
</protein>
<dbReference type="EC" id="3.2.1.17"/>
<dbReference type="EMBL" id="U40664">
    <property type="protein sequence ID" value="AAB97109.1"/>
    <property type="molecule type" value="Genomic_DNA"/>
</dbReference>
<dbReference type="SMR" id="P51782"/>
<dbReference type="CAZy" id="GH22">
    <property type="family name" value="Glycoside Hydrolase Family 22"/>
</dbReference>
<dbReference type="GO" id="GO:0005576">
    <property type="term" value="C:extracellular region"/>
    <property type="evidence" value="ECO:0007669"/>
    <property type="project" value="UniProtKB-SubCell"/>
</dbReference>
<dbReference type="GO" id="GO:0003796">
    <property type="term" value="F:lysozyme activity"/>
    <property type="evidence" value="ECO:0007669"/>
    <property type="project" value="UniProtKB-EC"/>
</dbReference>
<dbReference type="GO" id="GO:0050829">
    <property type="term" value="P:defense response to Gram-negative bacterium"/>
    <property type="evidence" value="ECO:0007669"/>
    <property type="project" value="TreeGrafter"/>
</dbReference>
<dbReference type="GO" id="GO:0050830">
    <property type="term" value="P:defense response to Gram-positive bacterium"/>
    <property type="evidence" value="ECO:0007669"/>
    <property type="project" value="TreeGrafter"/>
</dbReference>
<dbReference type="GO" id="GO:0031640">
    <property type="term" value="P:killing of cells of another organism"/>
    <property type="evidence" value="ECO:0007669"/>
    <property type="project" value="UniProtKB-KW"/>
</dbReference>
<dbReference type="CDD" id="cd16897">
    <property type="entry name" value="LYZ_C"/>
    <property type="match status" value="1"/>
</dbReference>
<dbReference type="FunFam" id="1.10.530.10:FF:000001">
    <property type="entry name" value="Lysozyme C"/>
    <property type="match status" value="1"/>
</dbReference>
<dbReference type="Gene3D" id="1.10.530.10">
    <property type="match status" value="1"/>
</dbReference>
<dbReference type="InterPro" id="IPR001916">
    <property type="entry name" value="Glyco_hydro_22"/>
</dbReference>
<dbReference type="InterPro" id="IPR019799">
    <property type="entry name" value="Glyco_hydro_22_CS"/>
</dbReference>
<dbReference type="InterPro" id="IPR000974">
    <property type="entry name" value="Glyco_hydro_22_lys"/>
</dbReference>
<dbReference type="InterPro" id="IPR023346">
    <property type="entry name" value="Lysozyme-like_dom_sf"/>
</dbReference>
<dbReference type="PANTHER" id="PTHR11407">
    <property type="entry name" value="LYSOZYME C"/>
    <property type="match status" value="1"/>
</dbReference>
<dbReference type="PANTHER" id="PTHR11407:SF28">
    <property type="entry name" value="LYSOZYME C"/>
    <property type="match status" value="1"/>
</dbReference>
<dbReference type="Pfam" id="PF00062">
    <property type="entry name" value="Lys"/>
    <property type="match status" value="1"/>
</dbReference>
<dbReference type="PRINTS" id="PR00137">
    <property type="entry name" value="LYSOZYME"/>
</dbReference>
<dbReference type="PRINTS" id="PR00135">
    <property type="entry name" value="LYZLACT"/>
</dbReference>
<dbReference type="SMART" id="SM00263">
    <property type="entry name" value="LYZ1"/>
    <property type="match status" value="1"/>
</dbReference>
<dbReference type="SUPFAM" id="SSF53955">
    <property type="entry name" value="Lysozyme-like"/>
    <property type="match status" value="1"/>
</dbReference>
<dbReference type="PROSITE" id="PS00128">
    <property type="entry name" value="GLYCOSYL_HYDROL_F22_1"/>
    <property type="match status" value="1"/>
</dbReference>
<dbReference type="PROSITE" id="PS51348">
    <property type="entry name" value="GLYCOSYL_HYDROL_F22_2"/>
    <property type="match status" value="1"/>
</dbReference>
<gene>
    <name type="primary">LYZ</name>
</gene>
<keyword id="KW-0929">Antimicrobial</keyword>
<keyword id="KW-0081">Bacteriolytic enzyme</keyword>
<keyword id="KW-0903">Direct protein sequencing</keyword>
<keyword id="KW-1015">Disulfide bond</keyword>
<keyword id="KW-0326">Glycosidase</keyword>
<keyword id="KW-0378">Hydrolase</keyword>
<keyword id="KW-0964">Secreted</keyword>
<keyword id="KW-0732">Signal</keyword>
<comment type="function">
    <text>Lysozymes have primarily a bacteriolytic function; those in tissues and body fluids are associated with the monocyte-macrophage system and enhance the activity of immunoagents.</text>
</comment>
<comment type="catalytic activity">
    <reaction>
        <text>Hydrolysis of (1-&gt;4)-beta-linkages between N-acetylmuramic acid and N-acetyl-D-glucosamine residues in a peptidoglycan and between N-acetyl-D-glucosamine residues in chitodextrins.</text>
        <dbReference type="EC" id="3.2.1.17"/>
    </reaction>
</comment>
<comment type="subunit">
    <text evidence="1">Monomer.</text>
</comment>
<comment type="subcellular location">
    <subcellularLocation>
        <location>Secreted</location>
    </subcellularLocation>
</comment>
<comment type="mass spectrometry"/>
<comment type="miscellaneous">
    <text>Lysozyme C is capable of both hydrolysis and transglycosylation; it also shows a slight esterase activity. It acts rapidly on both peptide-substituted and unsubstituted peptidoglycan, and slowly on chitin oligosaccharides.</text>
</comment>
<comment type="similarity">
    <text evidence="2">Belongs to the glycosyl hydrolase 22 family.</text>
</comment>
<organism>
    <name type="scientific">Trichosurus vulpecula</name>
    <name type="common">Brush-tailed possum</name>
    <dbReference type="NCBI Taxonomy" id="9337"/>
    <lineage>
        <taxon>Eukaryota</taxon>
        <taxon>Metazoa</taxon>
        <taxon>Chordata</taxon>
        <taxon>Craniata</taxon>
        <taxon>Vertebrata</taxon>
        <taxon>Euteleostomi</taxon>
        <taxon>Mammalia</taxon>
        <taxon>Metatheria</taxon>
        <taxon>Diprotodontia</taxon>
        <taxon>Phalangeridae</taxon>
        <taxon>Trichosurus</taxon>
    </lineage>
</organism>
<evidence type="ECO:0000250" key="1"/>
<evidence type="ECO:0000255" key="2">
    <source>
        <dbReference type="PROSITE-ProRule" id="PRU00680"/>
    </source>
</evidence>
<evidence type="ECO:0000269" key="3">
    <source>
    </source>
</evidence>
<sequence>MKVLLLLGFIFCSMAAHGKRMERCEFARRIKQLHLDGYHQISLANWVCLAQWESGFDTKATNYNPGDQSTDYGILQINSHYWCDDGKTPHAANECKVRCSELQEDDLVKAVNCAKKIVDQQGIRAWVAWRNKCEGKDLSKYLEGCHL</sequence>
<feature type="signal peptide">
    <location>
        <begin position="1"/>
        <end position="18"/>
    </location>
</feature>
<feature type="chain" id="PRO_0000018493" description="Lysozyme C">
    <location>
        <begin position="19"/>
        <end position="147"/>
    </location>
</feature>
<feature type="domain" description="C-type lysozyme" evidence="2">
    <location>
        <begin position="19"/>
        <end position="147"/>
    </location>
</feature>
<feature type="active site" evidence="2">
    <location>
        <position position="53"/>
    </location>
</feature>
<feature type="active site" evidence="2">
    <location>
        <position position="71"/>
    </location>
</feature>
<feature type="disulfide bond" evidence="2">
    <location>
        <begin position="24"/>
        <end position="145"/>
    </location>
</feature>
<feature type="disulfide bond" evidence="2">
    <location>
        <begin position="48"/>
        <end position="133"/>
    </location>
</feature>
<feature type="disulfide bond" evidence="2">
    <location>
        <begin position="83"/>
        <end position="99"/>
    </location>
</feature>
<feature type="disulfide bond" evidence="2">
    <location>
        <begin position="95"/>
        <end position="113"/>
    </location>
</feature>
<reference key="1">
    <citation type="journal article" date="1997" name="Biochim. Biophys. Acta">
        <title>Lysozyme and alpha-lactalbumin from the milk of a marsupial, the common brush-tailed possum (Trichosurus vulpecula).</title>
        <authorList>
            <person name="Piotte C.P."/>
            <person name="Marshall C.J."/>
            <person name="Hubbard M.J."/>
            <person name="Collet C."/>
            <person name="Grigor M.R."/>
        </authorList>
    </citation>
    <scope>NUCLEOTIDE SEQUENCE [GENOMIC DNA]</scope>
    <scope>PARTIAL PROTEIN SEQUENCE</scope>
    <scope>MASS SPECTROMETRY</scope>
    <source>
        <tissue>Mammary gland</tissue>
    </source>
</reference>
<proteinExistence type="evidence at protein level"/>
<accession>P51782</accession>